<evidence type="ECO:0000255" key="1">
    <source>
        <dbReference type="HAMAP-Rule" id="MF_01180"/>
    </source>
</evidence>
<name>FLIT_ECO45</name>
<gene>
    <name evidence="1" type="primary">fliT</name>
    <name type="ordered locus">ECS88_1980</name>
</gene>
<proteinExistence type="inferred from homology"/>
<organism>
    <name type="scientific">Escherichia coli O45:K1 (strain S88 / ExPEC)</name>
    <dbReference type="NCBI Taxonomy" id="585035"/>
    <lineage>
        <taxon>Bacteria</taxon>
        <taxon>Pseudomonadati</taxon>
        <taxon>Pseudomonadota</taxon>
        <taxon>Gammaproteobacteria</taxon>
        <taxon>Enterobacterales</taxon>
        <taxon>Enterobacteriaceae</taxon>
        <taxon>Escherichia</taxon>
    </lineage>
</organism>
<comment type="function">
    <text evidence="1">Dual-function protein that regulates the transcription of class 2 flagellar operons and that also acts as an export chaperone for the filament-capping protein FliD. As a transcriptional regulator, acts as an anti-FlhDC factor; it directly binds FlhC, thus inhibiting the binding of the FlhC/FlhD complex to class 2 promoters, resulting in decreased expression of class 2 flagellar operons. As a chaperone, effects FliD transition to the membrane by preventing its premature polymerization, and by directing it to the export apparatus.</text>
</comment>
<comment type="subunit">
    <text evidence="1">Homodimer. Interacts with FliD and FlhC.</text>
</comment>
<comment type="subcellular location">
    <subcellularLocation>
        <location evidence="1">Cytoplasm</location>
        <location evidence="1">Cytosol</location>
    </subcellularLocation>
</comment>
<comment type="similarity">
    <text evidence="1">Belongs to the FliT family.</text>
</comment>
<sequence>MNNAPHLYFAWQQLVEKSQLMLRLATEEQWDELIASEMAYVNAVQEIAHLTEEVAPSTTMQEQLRPMLHLILDNESKVKQLLQIRMDELAKLVGQSSVQKSVLSAYGDQGGFVLAPQDNLF</sequence>
<protein>
    <recommendedName>
        <fullName evidence="1">Flagellar protein FliT</fullName>
    </recommendedName>
</protein>
<accession>B7MCI3</accession>
<keyword id="KW-1005">Bacterial flagellum biogenesis</keyword>
<keyword id="KW-0143">Chaperone</keyword>
<keyword id="KW-0963">Cytoplasm</keyword>
<keyword id="KW-1185">Reference proteome</keyword>
<keyword id="KW-0678">Repressor</keyword>
<keyword id="KW-0804">Transcription</keyword>
<keyword id="KW-0805">Transcription regulation</keyword>
<dbReference type="EMBL" id="CU928161">
    <property type="protein sequence ID" value="CAR03280.1"/>
    <property type="molecule type" value="Genomic_DNA"/>
</dbReference>
<dbReference type="RefSeq" id="WP_001057836.1">
    <property type="nucleotide sequence ID" value="NC_011742.1"/>
</dbReference>
<dbReference type="SMR" id="B7MCI3"/>
<dbReference type="KEGG" id="ecz:ECS88_1980"/>
<dbReference type="HOGENOM" id="CLU_155793_1_1_6"/>
<dbReference type="Proteomes" id="UP000000747">
    <property type="component" value="Chromosome"/>
</dbReference>
<dbReference type="GO" id="GO:0005829">
    <property type="term" value="C:cytosol"/>
    <property type="evidence" value="ECO:0007669"/>
    <property type="project" value="UniProtKB-SubCell"/>
</dbReference>
<dbReference type="GO" id="GO:0044781">
    <property type="term" value="P:bacterial-type flagellum organization"/>
    <property type="evidence" value="ECO:0007669"/>
    <property type="project" value="UniProtKB-KW"/>
</dbReference>
<dbReference type="GO" id="GO:1902209">
    <property type="term" value="P:negative regulation of bacterial-type flagellum assembly"/>
    <property type="evidence" value="ECO:0007669"/>
    <property type="project" value="UniProtKB-UniRule"/>
</dbReference>
<dbReference type="GO" id="GO:0006457">
    <property type="term" value="P:protein folding"/>
    <property type="evidence" value="ECO:0007669"/>
    <property type="project" value="UniProtKB-UniRule"/>
</dbReference>
<dbReference type="FunFam" id="1.20.58.380:FF:000001">
    <property type="entry name" value="Flagellar protein FliT"/>
    <property type="match status" value="1"/>
</dbReference>
<dbReference type="Gene3D" id="1.20.58.380">
    <property type="entry name" value="Flagellar protein flit"/>
    <property type="match status" value="1"/>
</dbReference>
<dbReference type="HAMAP" id="MF_01180">
    <property type="entry name" value="FliT"/>
    <property type="match status" value="1"/>
</dbReference>
<dbReference type="InterPro" id="IPR008622">
    <property type="entry name" value="FliT"/>
</dbReference>
<dbReference type="NCBIfam" id="NF007836">
    <property type="entry name" value="PRK10548.1"/>
    <property type="match status" value="1"/>
</dbReference>
<dbReference type="Pfam" id="PF05400">
    <property type="entry name" value="FliT"/>
    <property type="match status" value="1"/>
</dbReference>
<reference key="1">
    <citation type="journal article" date="2009" name="PLoS Genet.">
        <title>Organised genome dynamics in the Escherichia coli species results in highly diverse adaptive paths.</title>
        <authorList>
            <person name="Touchon M."/>
            <person name="Hoede C."/>
            <person name="Tenaillon O."/>
            <person name="Barbe V."/>
            <person name="Baeriswyl S."/>
            <person name="Bidet P."/>
            <person name="Bingen E."/>
            <person name="Bonacorsi S."/>
            <person name="Bouchier C."/>
            <person name="Bouvet O."/>
            <person name="Calteau A."/>
            <person name="Chiapello H."/>
            <person name="Clermont O."/>
            <person name="Cruveiller S."/>
            <person name="Danchin A."/>
            <person name="Diard M."/>
            <person name="Dossat C."/>
            <person name="Karoui M.E."/>
            <person name="Frapy E."/>
            <person name="Garry L."/>
            <person name="Ghigo J.M."/>
            <person name="Gilles A.M."/>
            <person name="Johnson J."/>
            <person name="Le Bouguenec C."/>
            <person name="Lescat M."/>
            <person name="Mangenot S."/>
            <person name="Martinez-Jehanne V."/>
            <person name="Matic I."/>
            <person name="Nassif X."/>
            <person name="Oztas S."/>
            <person name="Petit M.A."/>
            <person name="Pichon C."/>
            <person name="Rouy Z."/>
            <person name="Ruf C.S."/>
            <person name="Schneider D."/>
            <person name="Tourret J."/>
            <person name="Vacherie B."/>
            <person name="Vallenet D."/>
            <person name="Medigue C."/>
            <person name="Rocha E.P.C."/>
            <person name="Denamur E."/>
        </authorList>
    </citation>
    <scope>NUCLEOTIDE SEQUENCE [LARGE SCALE GENOMIC DNA]</scope>
    <source>
        <strain>S88 / ExPEC</strain>
    </source>
</reference>
<feature type="chain" id="PRO_1000138175" description="Flagellar protein FliT">
    <location>
        <begin position="1"/>
        <end position="121"/>
    </location>
</feature>
<feature type="region of interest" description="Required for homodimerization" evidence="1">
    <location>
        <begin position="1"/>
        <end position="50"/>
    </location>
</feature>
<feature type="region of interest" description="FliD binding" evidence="1">
    <location>
        <begin position="60"/>
        <end position="98"/>
    </location>
</feature>